<reference key="1">
    <citation type="journal article" date="2004" name="Proc. Natl. Acad. Sci. U.S.A.">
        <title>The complete genomic sequence of Nocardia farcinica IFM 10152.</title>
        <authorList>
            <person name="Ishikawa J."/>
            <person name="Yamashita A."/>
            <person name="Mikami Y."/>
            <person name="Hoshino Y."/>
            <person name="Kurita H."/>
            <person name="Hotta K."/>
            <person name="Shiba T."/>
            <person name="Hattori M."/>
        </authorList>
    </citation>
    <scope>NUCLEOTIDE SEQUENCE [LARGE SCALE GENOMIC DNA]</scope>
    <source>
        <strain>IFM 10152</strain>
    </source>
</reference>
<gene>
    <name evidence="1" type="primary">fluC1</name>
    <name evidence="1" type="synonym">crcB1</name>
    <name type="ordered locus">NFA_44540</name>
</gene>
<comment type="function">
    <text evidence="1">Fluoride-specific ion channel. Important for reducing fluoride concentration in the cell, thus reducing its toxicity.</text>
</comment>
<comment type="catalytic activity">
    <reaction evidence="1">
        <text>fluoride(in) = fluoride(out)</text>
        <dbReference type="Rhea" id="RHEA:76159"/>
        <dbReference type="ChEBI" id="CHEBI:17051"/>
    </reaction>
    <physiologicalReaction direction="left-to-right" evidence="1">
        <dbReference type="Rhea" id="RHEA:76160"/>
    </physiologicalReaction>
</comment>
<comment type="activity regulation">
    <text evidence="1">Na(+) is not transported, but it plays an essential structural role and its presence is essential for fluoride channel function.</text>
</comment>
<comment type="subcellular location">
    <subcellularLocation>
        <location evidence="1">Cell membrane</location>
        <topology evidence="1">Multi-pass membrane protein</topology>
    </subcellularLocation>
</comment>
<comment type="similarity">
    <text evidence="1">Belongs to the fluoride channel Fluc/FEX (TC 1.A.43) family.</text>
</comment>
<feature type="chain" id="PRO_0000110143" description="Fluoride-specific ion channel FluC 1">
    <location>
        <begin position="1"/>
        <end position="142"/>
    </location>
</feature>
<feature type="transmembrane region" description="Helical" evidence="1">
    <location>
        <begin position="23"/>
        <end position="43"/>
    </location>
</feature>
<feature type="transmembrane region" description="Helical" evidence="1">
    <location>
        <begin position="54"/>
        <end position="74"/>
    </location>
</feature>
<feature type="transmembrane region" description="Helical" evidence="1">
    <location>
        <begin position="79"/>
        <end position="99"/>
    </location>
</feature>
<feature type="transmembrane region" description="Helical" evidence="1">
    <location>
        <begin position="116"/>
        <end position="136"/>
    </location>
</feature>
<feature type="binding site" evidence="1">
    <location>
        <position position="91"/>
    </location>
    <ligand>
        <name>Na(+)</name>
        <dbReference type="ChEBI" id="CHEBI:29101"/>
        <note>structural</note>
    </ligand>
</feature>
<feature type="binding site" evidence="1">
    <location>
        <position position="94"/>
    </location>
    <ligand>
        <name>Na(+)</name>
        <dbReference type="ChEBI" id="CHEBI:29101"/>
        <note>structural</note>
    </ligand>
</feature>
<accession>Q5YR86</accession>
<proteinExistence type="inferred from homology"/>
<name>FLUC1_NOCFA</name>
<keyword id="KW-1003">Cell membrane</keyword>
<keyword id="KW-0407">Ion channel</keyword>
<keyword id="KW-0406">Ion transport</keyword>
<keyword id="KW-0472">Membrane</keyword>
<keyword id="KW-0479">Metal-binding</keyword>
<keyword id="KW-1185">Reference proteome</keyword>
<keyword id="KW-0915">Sodium</keyword>
<keyword id="KW-0812">Transmembrane</keyword>
<keyword id="KW-1133">Transmembrane helix</keyword>
<keyword id="KW-0813">Transport</keyword>
<evidence type="ECO:0000255" key="1">
    <source>
        <dbReference type="HAMAP-Rule" id="MF_00454"/>
    </source>
</evidence>
<dbReference type="EMBL" id="AP006618">
    <property type="protein sequence ID" value="BAD59305.1"/>
    <property type="molecule type" value="Genomic_DNA"/>
</dbReference>
<dbReference type="SMR" id="Q5YR86"/>
<dbReference type="STRING" id="247156.NFA_44540"/>
<dbReference type="KEGG" id="nfa:NFA_44540"/>
<dbReference type="eggNOG" id="COG0239">
    <property type="taxonomic scope" value="Bacteria"/>
</dbReference>
<dbReference type="HOGENOM" id="CLU_114342_2_1_11"/>
<dbReference type="Proteomes" id="UP000006820">
    <property type="component" value="Chromosome"/>
</dbReference>
<dbReference type="GO" id="GO:0005886">
    <property type="term" value="C:plasma membrane"/>
    <property type="evidence" value="ECO:0007669"/>
    <property type="project" value="UniProtKB-SubCell"/>
</dbReference>
<dbReference type="GO" id="GO:0062054">
    <property type="term" value="F:fluoride channel activity"/>
    <property type="evidence" value="ECO:0007669"/>
    <property type="project" value="UniProtKB-UniRule"/>
</dbReference>
<dbReference type="GO" id="GO:0046872">
    <property type="term" value="F:metal ion binding"/>
    <property type="evidence" value="ECO:0007669"/>
    <property type="project" value="UniProtKB-KW"/>
</dbReference>
<dbReference type="GO" id="GO:0140114">
    <property type="term" value="P:cellular detoxification of fluoride"/>
    <property type="evidence" value="ECO:0007669"/>
    <property type="project" value="UniProtKB-UniRule"/>
</dbReference>
<dbReference type="HAMAP" id="MF_00454">
    <property type="entry name" value="FluC"/>
    <property type="match status" value="1"/>
</dbReference>
<dbReference type="InterPro" id="IPR003691">
    <property type="entry name" value="FluC"/>
</dbReference>
<dbReference type="PANTHER" id="PTHR28259">
    <property type="entry name" value="FLUORIDE EXPORT PROTEIN 1-RELATED"/>
    <property type="match status" value="1"/>
</dbReference>
<dbReference type="PANTHER" id="PTHR28259:SF1">
    <property type="entry name" value="FLUORIDE EXPORT PROTEIN 1-RELATED"/>
    <property type="match status" value="1"/>
</dbReference>
<dbReference type="Pfam" id="PF02537">
    <property type="entry name" value="CRCB"/>
    <property type="match status" value="1"/>
</dbReference>
<sequence>MVRRRHDGRGSDDRPTVRGGARVNIALVLLGGMLGAPVRYLIDRAVTARIDSPLPLGTLTVNIVGSAVLGGLIGASANGWLLTAAGTGFCGALTTFSTFGYETIRLVTDGAYGYALGNVVISVAASVGAVYAAVSLTNWVTP</sequence>
<organism>
    <name type="scientific">Nocardia farcinica (strain IFM 10152)</name>
    <dbReference type="NCBI Taxonomy" id="247156"/>
    <lineage>
        <taxon>Bacteria</taxon>
        <taxon>Bacillati</taxon>
        <taxon>Actinomycetota</taxon>
        <taxon>Actinomycetes</taxon>
        <taxon>Mycobacteriales</taxon>
        <taxon>Nocardiaceae</taxon>
        <taxon>Nocardia</taxon>
    </lineage>
</organism>
<protein>
    <recommendedName>
        <fullName evidence="1">Fluoride-specific ion channel FluC 1</fullName>
    </recommendedName>
</protein>